<name>INCA1_MOUSE</name>
<accession>Q6PKN7</accession>
<accession>Q4VAE2</accession>
<organism>
    <name type="scientific">Mus musculus</name>
    <name type="common">Mouse</name>
    <dbReference type="NCBI Taxonomy" id="10090"/>
    <lineage>
        <taxon>Eukaryota</taxon>
        <taxon>Metazoa</taxon>
        <taxon>Chordata</taxon>
        <taxon>Craniata</taxon>
        <taxon>Vertebrata</taxon>
        <taxon>Euteleostomi</taxon>
        <taxon>Mammalia</taxon>
        <taxon>Eutheria</taxon>
        <taxon>Euarchontoglires</taxon>
        <taxon>Glires</taxon>
        <taxon>Rodentia</taxon>
        <taxon>Myomorpha</taxon>
        <taxon>Muroidea</taxon>
        <taxon>Muridae</taxon>
        <taxon>Murinae</taxon>
        <taxon>Mus</taxon>
        <taxon>Mus</taxon>
    </lineage>
</organism>
<comment type="function">
    <text evidence="3 4">Binds to CDK2-bound cyclins and inhibits the kinase activity of CDK2; binding to cyclins is critical for its function as CDK inhibitor. Inhibits cell growth and proliferation and may play a role in cell cycle control (PubMed:21540187). Required for ING5-mediated regulation of S-phase progression, enhancement of Fas-induced apoptosis and inhibition of cell growth (PubMed:21750715).</text>
</comment>
<comment type="subunit">
    <text evidence="1 3">Interacts with CCNA1 (PubMed:21540187). Identified in a complex with CCNA1 and CDK2 (By similarity). Interacts with ZNF16; the interaction inhibits INCA1 activity and induces the cell cycle process (By similarity). Interacts with SPACA9 (By similarity). Interacts with CCNA2, CCNB1 and CCNE1 (By similarity). Interacts with the CCNA1/CDK2 complex (PubMed:21540187). Interacts with ING5, DAZAP2, RNF26, USP15, SPOUT1, DPH7, TRIM26 and RAB5C (By similarity).</text>
</comment>
<comment type="subcellular location">
    <subcellularLocation>
        <location evidence="1">Nucleus</location>
    </subcellularLocation>
    <subcellularLocation>
        <location evidence="1">Cytoplasm</location>
    </subcellularLocation>
</comment>
<comment type="alternative products">
    <event type="alternative splicing"/>
    <isoform>
        <id>Q6PKN7-1</id>
        <name>1</name>
        <sequence type="displayed"/>
    </isoform>
    <isoform>
        <id>Q6PKN7-2</id>
        <name>2</name>
        <sequence type="described" ref="VSP_033236"/>
    </isoform>
</comment>
<comment type="induction">
    <text evidence="3">By serum starvation.</text>
</comment>
<comment type="PTM">
    <text evidence="1">Phosphorylated when part of a complex with CCNA1 and CDK2.</text>
</comment>
<comment type="disruption phenotype">
    <text evidence="3">Mice show increased CDK2 activity in spleen with disruption of the splenic architecture.</text>
</comment>
<comment type="similarity">
    <text evidence="6">Belongs to the INCA family.</text>
</comment>
<sequence length="231" mass="26477">MQGQEDGDSILPFAKCSRVVSRFSPCSLPPQNRRPMPQPYGDAFWENLSQRSSSNWMVEQYIPPILRATDCSRPSLHPLEGLPPPEKLWRRKRKKLHLERMQKGPGSIPARVRAVTYHLEDLRRRQGIINELKRAQWGSSDATPELPALEEGFELLSTTKYFDVEEERATYPQKETYSVTPRDQLLWTPWTPVGQQGTYASGQLSSLTYSTATARKNPVYDPQAMELESEE</sequence>
<gene>
    <name type="primary">Inca1</name>
</gene>
<proteinExistence type="evidence at protein level"/>
<keyword id="KW-0025">Alternative splicing</keyword>
<keyword id="KW-0131">Cell cycle</keyword>
<keyword id="KW-0963">Cytoplasm</keyword>
<keyword id="KW-0539">Nucleus</keyword>
<keyword id="KW-0597">Phosphoprotein</keyword>
<keyword id="KW-0649">Protein kinase inhibitor</keyword>
<keyword id="KW-1185">Reference proteome</keyword>
<dbReference type="EMBL" id="AY601909">
    <property type="protein sequence ID" value="AAT09154.1"/>
    <property type="molecule type" value="mRNA"/>
</dbReference>
<dbReference type="EMBL" id="AY601910">
    <property type="protein sequence ID" value="AAT09155.1"/>
    <property type="molecule type" value="mRNA"/>
</dbReference>
<dbReference type="EMBL" id="AY601911">
    <property type="protein sequence ID" value="AAT09156.1"/>
    <property type="molecule type" value="mRNA"/>
</dbReference>
<dbReference type="EMBL" id="AY601912">
    <property type="protein sequence ID" value="AAT09157.1"/>
    <property type="molecule type" value="mRNA"/>
</dbReference>
<dbReference type="EMBL" id="AK139002">
    <property type="protein sequence ID" value="BAE23857.1"/>
    <property type="molecule type" value="mRNA"/>
</dbReference>
<dbReference type="EMBL" id="AL596117">
    <property type="status" value="NOT_ANNOTATED_CDS"/>
    <property type="molecule type" value="Genomic_DNA"/>
</dbReference>
<dbReference type="EMBL" id="CR933735">
    <property type="status" value="NOT_ANNOTATED_CDS"/>
    <property type="molecule type" value="Genomic_DNA"/>
</dbReference>
<dbReference type="EMBL" id="BC096427">
    <property type="protein sequence ID" value="AAH96427.1"/>
    <property type="molecule type" value="mRNA"/>
</dbReference>
<dbReference type="EMBL" id="BC115572">
    <property type="protein sequence ID" value="AAI15573.1"/>
    <property type="molecule type" value="mRNA"/>
</dbReference>
<dbReference type="EMBL" id="BC115573">
    <property type="protein sequence ID" value="AAI15574.1"/>
    <property type="molecule type" value="mRNA"/>
</dbReference>
<dbReference type="CCDS" id="CCDS24964.1">
    <molecule id="Q6PKN7-1"/>
</dbReference>
<dbReference type="CCDS" id="CCDS56789.1">
    <molecule id="Q6PKN7-2"/>
</dbReference>
<dbReference type="RefSeq" id="NP_001239411.1">
    <molecule id="Q6PKN7-1"/>
    <property type="nucleotide sequence ID" value="NM_001252482.2"/>
</dbReference>
<dbReference type="RefSeq" id="NP_001239412.1">
    <molecule id="Q6PKN7-1"/>
    <property type="nucleotide sequence ID" value="NM_001252483.2"/>
</dbReference>
<dbReference type="RefSeq" id="NP_001239413.1">
    <molecule id="Q6PKN7-1"/>
    <property type="nucleotide sequence ID" value="NM_001252484.2"/>
</dbReference>
<dbReference type="RefSeq" id="NP_001239414.1">
    <molecule id="Q6PKN7-2"/>
    <property type="nucleotide sequence ID" value="NM_001252485.2"/>
</dbReference>
<dbReference type="RefSeq" id="NP_001406019.1">
    <molecule id="Q6PKN7-1"/>
    <property type="nucleotide sequence ID" value="NM_001419090.1"/>
</dbReference>
<dbReference type="RefSeq" id="NP_001406020.1">
    <molecule id="Q6PKN7-1"/>
    <property type="nucleotide sequence ID" value="NM_001419091.1"/>
</dbReference>
<dbReference type="RefSeq" id="NP_001406021.1">
    <molecule id="Q6PKN7-1"/>
    <property type="nucleotide sequence ID" value="NM_001419092.1"/>
</dbReference>
<dbReference type="RefSeq" id="NP_001406022.1">
    <molecule id="Q6PKN7-1"/>
    <property type="nucleotide sequence ID" value="NM_001419093.1"/>
</dbReference>
<dbReference type="RefSeq" id="NP_001406023.1">
    <molecule id="Q6PKN7-2"/>
    <property type="nucleotide sequence ID" value="NM_001419094.1"/>
</dbReference>
<dbReference type="RefSeq" id="NP_001406024.1">
    <molecule id="Q6PKN7-2"/>
    <property type="nucleotide sequence ID" value="NM_001419095.1"/>
</dbReference>
<dbReference type="RefSeq" id="NP_001406025.1">
    <molecule id="Q6PKN7-2"/>
    <property type="nucleotide sequence ID" value="NM_001419096.1"/>
</dbReference>
<dbReference type="RefSeq" id="NP_998894.1">
    <molecule id="Q6PKN7-1"/>
    <property type="nucleotide sequence ID" value="NM_213729.2"/>
</dbReference>
<dbReference type="RefSeq" id="XP_006531989.1">
    <property type="nucleotide sequence ID" value="XM_006531926.3"/>
</dbReference>
<dbReference type="RefSeq" id="XP_006531991.1">
    <property type="nucleotide sequence ID" value="XM_006531928.3"/>
</dbReference>
<dbReference type="RefSeq" id="XP_006531992.1">
    <property type="nucleotide sequence ID" value="XM_006531929.3"/>
</dbReference>
<dbReference type="RefSeq" id="XP_036012088.1">
    <molecule id="Q6PKN7-2"/>
    <property type="nucleotide sequence ID" value="XM_036156195.1"/>
</dbReference>
<dbReference type="RefSeq" id="XP_036012090.1">
    <molecule id="Q6PKN7-2"/>
    <property type="nucleotide sequence ID" value="XM_036156197.1"/>
</dbReference>
<dbReference type="BioGRID" id="222180">
    <property type="interactions" value="2"/>
</dbReference>
<dbReference type="FunCoup" id="Q6PKN7">
    <property type="interactions" value="930"/>
</dbReference>
<dbReference type="STRING" id="10090.ENSMUSP00000073311"/>
<dbReference type="GlyGen" id="Q6PKN7">
    <property type="glycosylation" value="3 sites, 1 N-linked glycan (1 site)"/>
</dbReference>
<dbReference type="PhosphoSitePlus" id="Q6PKN7"/>
<dbReference type="PaxDb" id="10090-ENSMUSP00000073311"/>
<dbReference type="ProteomicsDB" id="267133">
    <molecule id="Q6PKN7-1"/>
</dbReference>
<dbReference type="ProteomicsDB" id="267134">
    <molecule id="Q6PKN7-2"/>
</dbReference>
<dbReference type="Antibodypedia" id="51738">
    <property type="antibodies" value="131 antibodies from 21 providers"/>
</dbReference>
<dbReference type="DNASU" id="103844"/>
<dbReference type="Ensembl" id="ENSMUST00000073625.8">
    <molecule id="Q6PKN7-1"/>
    <property type="protein sequence ID" value="ENSMUSP00000073311.2"/>
    <property type="gene ID" value="ENSMUSG00000057054.12"/>
</dbReference>
<dbReference type="Ensembl" id="ENSMUST00000108541.9">
    <molecule id="Q6PKN7-1"/>
    <property type="protein sequence ID" value="ENSMUSP00000104181.3"/>
    <property type="gene ID" value="ENSMUSG00000057054.12"/>
</dbReference>
<dbReference type="Ensembl" id="ENSMUST00000108542.8">
    <molecule id="Q6PKN7-1"/>
    <property type="protein sequence ID" value="ENSMUSP00000104182.2"/>
    <property type="gene ID" value="ENSMUSG00000057054.12"/>
</dbReference>
<dbReference type="Ensembl" id="ENSMUST00000108543.4">
    <molecule id="Q6PKN7-2"/>
    <property type="protein sequence ID" value="ENSMUSP00000104183.4"/>
    <property type="gene ID" value="ENSMUSG00000057054.12"/>
</dbReference>
<dbReference type="Ensembl" id="ENSMUST00000126114.9">
    <molecule id="Q6PKN7-1"/>
    <property type="protein sequence ID" value="ENSMUSP00000118761.3"/>
    <property type="gene ID" value="ENSMUSG00000057054.12"/>
</dbReference>
<dbReference type="GeneID" id="103844"/>
<dbReference type="KEGG" id="mmu:103844"/>
<dbReference type="UCSC" id="uc007jwg.2">
    <molecule id="Q6PKN7-1"/>
    <property type="organism name" value="mouse"/>
</dbReference>
<dbReference type="AGR" id="MGI:2144284"/>
<dbReference type="CTD" id="388324"/>
<dbReference type="MGI" id="MGI:2144284">
    <property type="gene designation" value="Inca1"/>
</dbReference>
<dbReference type="VEuPathDB" id="HostDB:ENSMUSG00000057054"/>
<dbReference type="eggNOG" id="ENOG502SX61">
    <property type="taxonomic scope" value="Eukaryota"/>
</dbReference>
<dbReference type="GeneTree" id="ENSGT00390000000242"/>
<dbReference type="HOGENOM" id="CLU_103802_0_0_1"/>
<dbReference type="InParanoid" id="Q6PKN7"/>
<dbReference type="OMA" id="WGMELES"/>
<dbReference type="OrthoDB" id="9833817at2759"/>
<dbReference type="PhylomeDB" id="Q6PKN7"/>
<dbReference type="TreeFam" id="TF343431"/>
<dbReference type="BioGRID-ORCS" id="103844">
    <property type="hits" value="0 hits in 76 CRISPR screens"/>
</dbReference>
<dbReference type="ChiTaRS" id="Inca1">
    <property type="organism name" value="mouse"/>
</dbReference>
<dbReference type="PRO" id="PR:Q6PKN7"/>
<dbReference type="Proteomes" id="UP000000589">
    <property type="component" value="Chromosome 11"/>
</dbReference>
<dbReference type="RNAct" id="Q6PKN7">
    <property type="molecule type" value="protein"/>
</dbReference>
<dbReference type="Bgee" id="ENSMUSG00000057054">
    <property type="expression patterns" value="Expressed in left lobe of liver and 117 other cell types or tissues"/>
</dbReference>
<dbReference type="GO" id="GO:0005737">
    <property type="term" value="C:cytoplasm"/>
    <property type="evidence" value="ECO:0000250"/>
    <property type="project" value="UniProtKB"/>
</dbReference>
<dbReference type="GO" id="GO:0016604">
    <property type="term" value="C:nuclear body"/>
    <property type="evidence" value="ECO:0007669"/>
    <property type="project" value="Ensembl"/>
</dbReference>
<dbReference type="GO" id="GO:0005634">
    <property type="term" value="C:nucleus"/>
    <property type="evidence" value="ECO:0000250"/>
    <property type="project" value="UniProtKB"/>
</dbReference>
<dbReference type="GO" id="GO:0030332">
    <property type="term" value="F:cyclin binding"/>
    <property type="evidence" value="ECO:0000314"/>
    <property type="project" value="MGI"/>
</dbReference>
<dbReference type="GO" id="GO:0004861">
    <property type="term" value="F:cyclin-dependent protein serine/threonine kinase inhibitor activity"/>
    <property type="evidence" value="ECO:0000266"/>
    <property type="project" value="MGI"/>
</dbReference>
<dbReference type="GO" id="GO:0042802">
    <property type="term" value="F:identical protein binding"/>
    <property type="evidence" value="ECO:0007669"/>
    <property type="project" value="Ensembl"/>
</dbReference>
<dbReference type="GO" id="GO:0044877">
    <property type="term" value="F:protein-containing complex binding"/>
    <property type="evidence" value="ECO:0007669"/>
    <property type="project" value="Ensembl"/>
</dbReference>
<dbReference type="GO" id="GO:0097190">
    <property type="term" value="P:apoptotic signaling pathway"/>
    <property type="evidence" value="ECO:0000316"/>
    <property type="project" value="MGI"/>
</dbReference>
<dbReference type="GO" id="GO:0048144">
    <property type="term" value="P:fibroblast proliferation"/>
    <property type="evidence" value="ECO:0000315"/>
    <property type="project" value="MGI"/>
</dbReference>
<dbReference type="GO" id="GO:0008285">
    <property type="term" value="P:negative regulation of cell population proliferation"/>
    <property type="evidence" value="ECO:0000314"/>
    <property type="project" value="MGI"/>
</dbReference>
<dbReference type="GO" id="GO:0048147">
    <property type="term" value="P:negative regulation of fibroblast proliferation"/>
    <property type="evidence" value="ECO:0000315"/>
    <property type="project" value="MGI"/>
</dbReference>
<dbReference type="GO" id="GO:2001235">
    <property type="term" value="P:positive regulation of apoptotic signaling pathway"/>
    <property type="evidence" value="ECO:0000316"/>
    <property type="project" value="MGI"/>
</dbReference>
<dbReference type="InterPro" id="IPR026238">
    <property type="entry name" value="INCA1"/>
</dbReference>
<dbReference type="PANTHER" id="PTHR37341">
    <property type="entry name" value="PROTEIN INCA1"/>
    <property type="match status" value="1"/>
</dbReference>
<dbReference type="PANTHER" id="PTHR37341:SF1">
    <property type="entry name" value="PROTEIN INCA1"/>
    <property type="match status" value="1"/>
</dbReference>
<dbReference type="Pfam" id="PF15142">
    <property type="entry name" value="INCA1"/>
    <property type="match status" value="1"/>
</dbReference>
<dbReference type="PRINTS" id="PR02102">
    <property type="entry name" value="PROTEININCA1"/>
</dbReference>
<feature type="chain" id="PRO_0000331514" description="Protein INCA1">
    <location>
        <begin position="1"/>
        <end position="231"/>
    </location>
</feature>
<feature type="region of interest" description="Interaction with CCNA1 and CCNA1/CDK2 complex; essential for CDK2 inhibitory activity" evidence="3">
    <location>
        <begin position="75"/>
        <end position="99"/>
    </location>
</feature>
<feature type="short sequence motif" description="Nuclear localization signal" evidence="2">
    <location>
        <begin position="90"/>
        <end position="95"/>
    </location>
</feature>
<feature type="modified residue" description="Phosphothreonine" evidence="1">
    <location>
        <position position="180"/>
    </location>
</feature>
<feature type="splice variant" id="VSP_033236" description="In isoform 2." evidence="5">
    <location>
        <begin position="1"/>
        <end position="35"/>
    </location>
</feature>
<reference key="1">
    <citation type="journal article" date="2004" name="J. Biol. Chem.">
        <title>Identification of interaction partners and substrates of the cyclin A1-CDK2 complex.</title>
        <authorList>
            <person name="Diederichs S."/>
            <person name="Baeumer N."/>
            <person name="Ji P."/>
            <person name="Metzelder S.K."/>
            <person name="Idos G.E."/>
            <person name="Cauvet T."/>
            <person name="Wang W."/>
            <person name="Moeller M."/>
            <person name="Pierschalski S."/>
            <person name="Gromoll J."/>
            <person name="Schrader M.G."/>
            <person name="Koeffler H.P."/>
            <person name="Berdel W.E."/>
            <person name="Serve H."/>
            <person name="Mueller-Tidow C."/>
        </authorList>
    </citation>
    <scope>NUCLEOTIDE SEQUENCE [MRNA] (ISOFORM 1)</scope>
</reference>
<reference key="2">
    <citation type="journal article" date="2005" name="Science">
        <title>The transcriptional landscape of the mammalian genome.</title>
        <authorList>
            <person name="Carninci P."/>
            <person name="Kasukawa T."/>
            <person name="Katayama S."/>
            <person name="Gough J."/>
            <person name="Frith M.C."/>
            <person name="Maeda N."/>
            <person name="Oyama R."/>
            <person name="Ravasi T."/>
            <person name="Lenhard B."/>
            <person name="Wells C."/>
            <person name="Kodzius R."/>
            <person name="Shimokawa K."/>
            <person name="Bajic V.B."/>
            <person name="Brenner S.E."/>
            <person name="Batalov S."/>
            <person name="Forrest A.R."/>
            <person name="Zavolan M."/>
            <person name="Davis M.J."/>
            <person name="Wilming L.G."/>
            <person name="Aidinis V."/>
            <person name="Allen J.E."/>
            <person name="Ambesi-Impiombato A."/>
            <person name="Apweiler R."/>
            <person name="Aturaliya R.N."/>
            <person name="Bailey T.L."/>
            <person name="Bansal M."/>
            <person name="Baxter L."/>
            <person name="Beisel K.W."/>
            <person name="Bersano T."/>
            <person name="Bono H."/>
            <person name="Chalk A.M."/>
            <person name="Chiu K.P."/>
            <person name="Choudhary V."/>
            <person name="Christoffels A."/>
            <person name="Clutterbuck D.R."/>
            <person name="Crowe M.L."/>
            <person name="Dalla E."/>
            <person name="Dalrymple B.P."/>
            <person name="de Bono B."/>
            <person name="Della Gatta G."/>
            <person name="di Bernardo D."/>
            <person name="Down T."/>
            <person name="Engstrom P."/>
            <person name="Fagiolini M."/>
            <person name="Faulkner G."/>
            <person name="Fletcher C.F."/>
            <person name="Fukushima T."/>
            <person name="Furuno M."/>
            <person name="Futaki S."/>
            <person name="Gariboldi M."/>
            <person name="Georgii-Hemming P."/>
            <person name="Gingeras T.R."/>
            <person name="Gojobori T."/>
            <person name="Green R.E."/>
            <person name="Gustincich S."/>
            <person name="Harbers M."/>
            <person name="Hayashi Y."/>
            <person name="Hensch T.K."/>
            <person name="Hirokawa N."/>
            <person name="Hill D."/>
            <person name="Huminiecki L."/>
            <person name="Iacono M."/>
            <person name="Ikeo K."/>
            <person name="Iwama A."/>
            <person name="Ishikawa T."/>
            <person name="Jakt M."/>
            <person name="Kanapin A."/>
            <person name="Katoh M."/>
            <person name="Kawasawa Y."/>
            <person name="Kelso J."/>
            <person name="Kitamura H."/>
            <person name="Kitano H."/>
            <person name="Kollias G."/>
            <person name="Krishnan S.P."/>
            <person name="Kruger A."/>
            <person name="Kummerfeld S.K."/>
            <person name="Kurochkin I.V."/>
            <person name="Lareau L.F."/>
            <person name="Lazarevic D."/>
            <person name="Lipovich L."/>
            <person name="Liu J."/>
            <person name="Liuni S."/>
            <person name="McWilliam S."/>
            <person name="Madan Babu M."/>
            <person name="Madera M."/>
            <person name="Marchionni L."/>
            <person name="Matsuda H."/>
            <person name="Matsuzawa S."/>
            <person name="Miki H."/>
            <person name="Mignone F."/>
            <person name="Miyake S."/>
            <person name="Morris K."/>
            <person name="Mottagui-Tabar S."/>
            <person name="Mulder N."/>
            <person name="Nakano N."/>
            <person name="Nakauchi H."/>
            <person name="Ng P."/>
            <person name="Nilsson R."/>
            <person name="Nishiguchi S."/>
            <person name="Nishikawa S."/>
            <person name="Nori F."/>
            <person name="Ohara O."/>
            <person name="Okazaki Y."/>
            <person name="Orlando V."/>
            <person name="Pang K.C."/>
            <person name="Pavan W.J."/>
            <person name="Pavesi G."/>
            <person name="Pesole G."/>
            <person name="Petrovsky N."/>
            <person name="Piazza S."/>
            <person name="Reed J."/>
            <person name="Reid J.F."/>
            <person name="Ring B.Z."/>
            <person name="Ringwald M."/>
            <person name="Rost B."/>
            <person name="Ruan Y."/>
            <person name="Salzberg S.L."/>
            <person name="Sandelin A."/>
            <person name="Schneider C."/>
            <person name="Schoenbach C."/>
            <person name="Sekiguchi K."/>
            <person name="Semple C.A."/>
            <person name="Seno S."/>
            <person name="Sessa L."/>
            <person name="Sheng Y."/>
            <person name="Shibata Y."/>
            <person name="Shimada H."/>
            <person name="Shimada K."/>
            <person name="Silva D."/>
            <person name="Sinclair B."/>
            <person name="Sperling S."/>
            <person name="Stupka E."/>
            <person name="Sugiura K."/>
            <person name="Sultana R."/>
            <person name="Takenaka Y."/>
            <person name="Taki K."/>
            <person name="Tammoja K."/>
            <person name="Tan S.L."/>
            <person name="Tang S."/>
            <person name="Taylor M.S."/>
            <person name="Tegner J."/>
            <person name="Teichmann S.A."/>
            <person name="Ueda H.R."/>
            <person name="van Nimwegen E."/>
            <person name="Verardo R."/>
            <person name="Wei C.L."/>
            <person name="Yagi K."/>
            <person name="Yamanishi H."/>
            <person name="Zabarovsky E."/>
            <person name="Zhu S."/>
            <person name="Zimmer A."/>
            <person name="Hide W."/>
            <person name="Bult C."/>
            <person name="Grimmond S.M."/>
            <person name="Teasdale R.D."/>
            <person name="Liu E.T."/>
            <person name="Brusic V."/>
            <person name="Quackenbush J."/>
            <person name="Wahlestedt C."/>
            <person name="Mattick J.S."/>
            <person name="Hume D.A."/>
            <person name="Kai C."/>
            <person name="Sasaki D."/>
            <person name="Tomaru Y."/>
            <person name="Fukuda S."/>
            <person name="Kanamori-Katayama M."/>
            <person name="Suzuki M."/>
            <person name="Aoki J."/>
            <person name="Arakawa T."/>
            <person name="Iida J."/>
            <person name="Imamura K."/>
            <person name="Itoh M."/>
            <person name="Kato T."/>
            <person name="Kawaji H."/>
            <person name="Kawagashira N."/>
            <person name="Kawashima T."/>
            <person name="Kojima M."/>
            <person name="Kondo S."/>
            <person name="Konno H."/>
            <person name="Nakano K."/>
            <person name="Ninomiya N."/>
            <person name="Nishio T."/>
            <person name="Okada M."/>
            <person name="Plessy C."/>
            <person name="Shibata K."/>
            <person name="Shiraki T."/>
            <person name="Suzuki S."/>
            <person name="Tagami M."/>
            <person name="Waki K."/>
            <person name="Watahiki A."/>
            <person name="Okamura-Oho Y."/>
            <person name="Suzuki H."/>
            <person name="Kawai J."/>
            <person name="Hayashizaki Y."/>
        </authorList>
    </citation>
    <scope>NUCLEOTIDE SEQUENCE [LARGE SCALE MRNA] (ISOFORM 1)</scope>
    <source>
        <strain>C57BL/6J</strain>
        <tissue>Aorta</tissue>
        <tissue>Vein</tissue>
    </source>
</reference>
<reference key="3">
    <citation type="journal article" date="2009" name="PLoS Biol.">
        <title>Lineage-specific biology revealed by a finished genome assembly of the mouse.</title>
        <authorList>
            <person name="Church D.M."/>
            <person name="Goodstadt L."/>
            <person name="Hillier L.W."/>
            <person name="Zody M.C."/>
            <person name="Goldstein S."/>
            <person name="She X."/>
            <person name="Bult C.J."/>
            <person name="Agarwala R."/>
            <person name="Cherry J.L."/>
            <person name="DiCuccio M."/>
            <person name="Hlavina W."/>
            <person name="Kapustin Y."/>
            <person name="Meric P."/>
            <person name="Maglott D."/>
            <person name="Birtle Z."/>
            <person name="Marques A.C."/>
            <person name="Graves T."/>
            <person name="Zhou S."/>
            <person name="Teague B."/>
            <person name="Potamousis K."/>
            <person name="Churas C."/>
            <person name="Place M."/>
            <person name="Herschleb J."/>
            <person name="Runnheim R."/>
            <person name="Forrest D."/>
            <person name="Amos-Landgraf J."/>
            <person name="Schwartz D.C."/>
            <person name="Cheng Z."/>
            <person name="Lindblad-Toh K."/>
            <person name="Eichler E.E."/>
            <person name="Ponting C.P."/>
        </authorList>
    </citation>
    <scope>NUCLEOTIDE SEQUENCE [LARGE SCALE GENOMIC DNA]</scope>
    <source>
        <strain>C57BL/6J</strain>
    </source>
</reference>
<reference key="4">
    <citation type="journal article" date="2004" name="Genome Res.">
        <title>The status, quality, and expansion of the NIH full-length cDNA project: the Mammalian Gene Collection (MGC).</title>
        <authorList>
            <consortium name="The MGC Project Team"/>
        </authorList>
    </citation>
    <scope>NUCLEOTIDE SEQUENCE [LARGE SCALE MRNA] (ISOFORMS 1 AND 2)</scope>
    <source>
        <strain>FVB/N</strain>
        <tissue>Liver</tissue>
    </source>
</reference>
<reference key="5">
    <citation type="journal article" date="2011" name="J. Biol. Chem.">
        <title>Inhibitor of cyclin-dependent kinase (CDK) interacting with cyclin A1 (INCA1) regulates proliferation and is repressed by oncogenic signaling.</title>
        <authorList>
            <person name="Baeumer N."/>
            <person name="Tickenbrock L."/>
            <person name="Tschanter P."/>
            <person name="Lohmeyer L."/>
            <person name="Diederichs S."/>
            <person name="Baeumer S."/>
            <person name="Skryabin B.V."/>
            <person name="Zhang F."/>
            <person name="Agrawal-Singh S."/>
            <person name="Koehler G."/>
            <person name="Berdel W.E."/>
            <person name="Serve H."/>
            <person name="Koschmieder S."/>
            <person name="Mueller-Tidow C."/>
        </authorList>
    </citation>
    <scope>FUNCTION</scope>
    <scope>DISRUPTION PHENOTYPE</scope>
    <scope>INTERACTION WITH CCNA1</scope>
    <scope>INTERACTION WITH THE CCNA1/CDK2 COMPLEX</scope>
    <scope>INDUCTION</scope>
</reference>
<reference key="6">
    <citation type="journal article" date="2011" name="PLoS ONE">
        <title>The inhibitor of growth protein 5 (ING5) depends on INCA1 as a co-factor for its antiproliferative effects.</title>
        <authorList>
            <person name="Zhang F."/>
            <person name="Baeumer N."/>
            <person name="Rode M."/>
            <person name="Ji P."/>
            <person name="Zhang T."/>
            <person name="Berdel W.E."/>
            <person name="Mueller-Tidow C."/>
        </authorList>
    </citation>
    <scope>FUNCTION</scope>
</reference>
<protein>
    <recommendedName>
        <fullName>Protein INCA1</fullName>
    </recommendedName>
    <alternativeName>
        <fullName>Inhibitor of CDK interacting with cyclin A1</fullName>
    </alternativeName>
</protein>
<evidence type="ECO:0000250" key="1">
    <source>
        <dbReference type="UniProtKB" id="Q0VD86"/>
    </source>
</evidence>
<evidence type="ECO:0000255" key="2"/>
<evidence type="ECO:0000269" key="3">
    <source>
    </source>
</evidence>
<evidence type="ECO:0000269" key="4">
    <source>
    </source>
</evidence>
<evidence type="ECO:0000303" key="5">
    <source>
    </source>
</evidence>
<evidence type="ECO:0000305" key="6"/>